<feature type="chain" id="PRO_1000126599" description="Large ribosomal subunit protein bL31">
    <location>
        <begin position="1"/>
        <end position="79"/>
    </location>
</feature>
<feature type="binding site" evidence="1">
    <location>
        <position position="16"/>
    </location>
    <ligand>
        <name>Zn(2+)</name>
        <dbReference type="ChEBI" id="CHEBI:29105"/>
    </ligand>
</feature>
<feature type="binding site" evidence="1">
    <location>
        <position position="18"/>
    </location>
    <ligand>
        <name>Zn(2+)</name>
        <dbReference type="ChEBI" id="CHEBI:29105"/>
    </ligand>
</feature>
<feature type="binding site" evidence="1">
    <location>
        <position position="37"/>
    </location>
    <ligand>
        <name>Zn(2+)</name>
        <dbReference type="ChEBI" id="CHEBI:29105"/>
    </ligand>
</feature>
<feature type="binding site" evidence="1">
    <location>
        <position position="40"/>
    </location>
    <ligand>
        <name>Zn(2+)</name>
        <dbReference type="ChEBI" id="CHEBI:29105"/>
    </ligand>
</feature>
<protein>
    <recommendedName>
        <fullName evidence="1">Large ribosomal subunit protein bL31</fullName>
    </recommendedName>
    <alternativeName>
        <fullName evidence="2">50S ribosomal protein L31</fullName>
    </alternativeName>
</protein>
<dbReference type="EMBL" id="CP000733">
    <property type="protein sequence ID" value="ABS78525.1"/>
    <property type="molecule type" value="Genomic_DNA"/>
</dbReference>
<dbReference type="RefSeq" id="WP_005768737.1">
    <property type="nucleotide sequence ID" value="NC_009727.1"/>
</dbReference>
<dbReference type="SMR" id="A9KG10"/>
<dbReference type="KEGG" id="cbd:CBUD_0971"/>
<dbReference type="HOGENOM" id="CLU_114306_4_0_6"/>
<dbReference type="Proteomes" id="UP000008555">
    <property type="component" value="Chromosome"/>
</dbReference>
<dbReference type="GO" id="GO:1990904">
    <property type="term" value="C:ribonucleoprotein complex"/>
    <property type="evidence" value="ECO:0007669"/>
    <property type="project" value="UniProtKB-KW"/>
</dbReference>
<dbReference type="GO" id="GO:0005840">
    <property type="term" value="C:ribosome"/>
    <property type="evidence" value="ECO:0007669"/>
    <property type="project" value="UniProtKB-KW"/>
</dbReference>
<dbReference type="GO" id="GO:0046872">
    <property type="term" value="F:metal ion binding"/>
    <property type="evidence" value="ECO:0007669"/>
    <property type="project" value="UniProtKB-KW"/>
</dbReference>
<dbReference type="GO" id="GO:0019843">
    <property type="term" value="F:rRNA binding"/>
    <property type="evidence" value="ECO:0007669"/>
    <property type="project" value="UniProtKB-KW"/>
</dbReference>
<dbReference type="GO" id="GO:0003735">
    <property type="term" value="F:structural constituent of ribosome"/>
    <property type="evidence" value="ECO:0007669"/>
    <property type="project" value="InterPro"/>
</dbReference>
<dbReference type="GO" id="GO:0006412">
    <property type="term" value="P:translation"/>
    <property type="evidence" value="ECO:0007669"/>
    <property type="project" value="UniProtKB-UniRule"/>
</dbReference>
<dbReference type="Gene3D" id="4.10.830.30">
    <property type="entry name" value="Ribosomal protein L31"/>
    <property type="match status" value="1"/>
</dbReference>
<dbReference type="HAMAP" id="MF_00501">
    <property type="entry name" value="Ribosomal_bL31_1"/>
    <property type="match status" value="1"/>
</dbReference>
<dbReference type="InterPro" id="IPR034704">
    <property type="entry name" value="Ribosomal_bL28/bL31-like_sf"/>
</dbReference>
<dbReference type="InterPro" id="IPR002150">
    <property type="entry name" value="Ribosomal_bL31"/>
</dbReference>
<dbReference type="InterPro" id="IPR027491">
    <property type="entry name" value="Ribosomal_bL31_A"/>
</dbReference>
<dbReference type="InterPro" id="IPR042105">
    <property type="entry name" value="Ribosomal_bL31_sf"/>
</dbReference>
<dbReference type="NCBIfam" id="TIGR00105">
    <property type="entry name" value="L31"/>
    <property type="match status" value="1"/>
</dbReference>
<dbReference type="NCBIfam" id="NF000612">
    <property type="entry name" value="PRK00019.1"/>
    <property type="match status" value="1"/>
</dbReference>
<dbReference type="NCBIfam" id="NF001809">
    <property type="entry name" value="PRK00528.1"/>
    <property type="match status" value="1"/>
</dbReference>
<dbReference type="PANTHER" id="PTHR33280">
    <property type="entry name" value="50S RIBOSOMAL PROTEIN L31, CHLOROPLASTIC"/>
    <property type="match status" value="1"/>
</dbReference>
<dbReference type="PANTHER" id="PTHR33280:SF6">
    <property type="entry name" value="LARGE RIBOSOMAL SUBUNIT PROTEIN BL31A"/>
    <property type="match status" value="1"/>
</dbReference>
<dbReference type="Pfam" id="PF01197">
    <property type="entry name" value="Ribosomal_L31"/>
    <property type="match status" value="1"/>
</dbReference>
<dbReference type="PRINTS" id="PR01249">
    <property type="entry name" value="RIBOSOMALL31"/>
</dbReference>
<dbReference type="SUPFAM" id="SSF143800">
    <property type="entry name" value="L28p-like"/>
    <property type="match status" value="1"/>
</dbReference>
<dbReference type="PROSITE" id="PS01143">
    <property type="entry name" value="RIBOSOMAL_L31"/>
    <property type="match status" value="1"/>
</dbReference>
<accession>A9KG10</accession>
<keyword id="KW-0479">Metal-binding</keyword>
<keyword id="KW-0687">Ribonucleoprotein</keyword>
<keyword id="KW-0689">Ribosomal protein</keyword>
<keyword id="KW-0694">RNA-binding</keyword>
<keyword id="KW-0699">rRNA-binding</keyword>
<keyword id="KW-0862">Zinc</keyword>
<evidence type="ECO:0000255" key="1">
    <source>
        <dbReference type="HAMAP-Rule" id="MF_00501"/>
    </source>
</evidence>
<evidence type="ECO:0000305" key="2"/>
<proteinExistence type="inferred from homology"/>
<gene>
    <name evidence="1" type="primary">rpmE</name>
    <name type="ordered locus">CBUD_0971</name>
</gene>
<reference key="1">
    <citation type="journal article" date="2009" name="Infect. Immun.">
        <title>Comparative genomics reveal extensive transposon-mediated genomic plasticity and diversity among potential effector proteins within the genus Coxiella.</title>
        <authorList>
            <person name="Beare P.A."/>
            <person name="Unsworth N."/>
            <person name="Andoh M."/>
            <person name="Voth D.E."/>
            <person name="Omsland A."/>
            <person name="Gilk S.D."/>
            <person name="Williams K.P."/>
            <person name="Sobral B.W."/>
            <person name="Kupko J.J. III"/>
            <person name="Porcella S.F."/>
            <person name="Samuel J.E."/>
            <person name="Heinzen R.A."/>
        </authorList>
    </citation>
    <scope>NUCLEOTIDE SEQUENCE [LARGE SCALE GENOMIC DNA]</scope>
    <source>
        <strain>Dugway 5J108-111</strain>
    </source>
</reference>
<organism>
    <name type="scientific">Coxiella burnetii (strain Dugway 5J108-111)</name>
    <dbReference type="NCBI Taxonomy" id="434922"/>
    <lineage>
        <taxon>Bacteria</taxon>
        <taxon>Pseudomonadati</taxon>
        <taxon>Pseudomonadota</taxon>
        <taxon>Gammaproteobacteria</taxon>
        <taxon>Legionellales</taxon>
        <taxon>Coxiellaceae</taxon>
        <taxon>Coxiella</taxon>
    </lineage>
</organism>
<sequence length="79" mass="9078">MKENIHPPYKQIKVTCSCGNTFMTGSTLDRELHLEICSACHPFYTGQQKMVDTAGRVERFRKKYAKRRAANASPEDEKK</sequence>
<name>RL31_COXBN</name>
<comment type="function">
    <text evidence="1">Binds the 23S rRNA.</text>
</comment>
<comment type="cofactor">
    <cofactor evidence="1">
        <name>Zn(2+)</name>
        <dbReference type="ChEBI" id="CHEBI:29105"/>
    </cofactor>
    <text evidence="1">Binds 1 zinc ion per subunit.</text>
</comment>
<comment type="subunit">
    <text evidence="1">Part of the 50S ribosomal subunit.</text>
</comment>
<comment type="similarity">
    <text evidence="1">Belongs to the bacterial ribosomal protein bL31 family. Type A subfamily.</text>
</comment>